<feature type="chain" id="PRO_1000213377" description="3-isopropylmalate dehydrogenase">
    <location>
        <begin position="1"/>
        <end position="337"/>
    </location>
</feature>
<feature type="binding site" evidence="1">
    <location>
        <position position="88"/>
    </location>
    <ligand>
        <name>substrate</name>
    </ligand>
</feature>
<feature type="binding site" evidence="1">
    <location>
        <position position="98"/>
    </location>
    <ligand>
        <name>substrate</name>
    </ligand>
</feature>
<feature type="binding site" evidence="1">
    <location>
        <position position="122"/>
    </location>
    <ligand>
        <name>substrate</name>
    </ligand>
</feature>
<feature type="binding site" evidence="1">
    <location>
        <position position="212"/>
    </location>
    <ligand>
        <name>Mg(2+)</name>
        <dbReference type="ChEBI" id="CHEBI:18420"/>
    </ligand>
</feature>
<feature type="binding site" evidence="1">
    <location>
        <position position="212"/>
    </location>
    <ligand>
        <name>substrate</name>
    </ligand>
</feature>
<feature type="binding site" evidence="1">
    <location>
        <position position="236"/>
    </location>
    <ligand>
        <name>Mg(2+)</name>
        <dbReference type="ChEBI" id="CHEBI:18420"/>
    </ligand>
</feature>
<feature type="binding site" evidence="1">
    <location>
        <position position="240"/>
    </location>
    <ligand>
        <name>Mg(2+)</name>
        <dbReference type="ChEBI" id="CHEBI:18420"/>
    </ligand>
</feature>
<feature type="binding site" evidence="1">
    <location>
        <begin position="272"/>
        <end position="284"/>
    </location>
    <ligand>
        <name>NAD(+)</name>
        <dbReference type="ChEBI" id="CHEBI:57540"/>
    </ligand>
</feature>
<feature type="site" description="Important for catalysis" evidence="1">
    <location>
        <position position="129"/>
    </location>
</feature>
<feature type="site" description="Important for catalysis" evidence="1">
    <location>
        <position position="179"/>
    </location>
</feature>
<evidence type="ECO:0000255" key="1">
    <source>
        <dbReference type="HAMAP-Rule" id="MF_01035"/>
    </source>
</evidence>
<keyword id="KW-0028">Amino-acid biosynthesis</keyword>
<keyword id="KW-0100">Branched-chain amino acid biosynthesis</keyword>
<keyword id="KW-0963">Cytoplasm</keyword>
<keyword id="KW-0432">Leucine biosynthesis</keyword>
<keyword id="KW-0460">Magnesium</keyword>
<keyword id="KW-0464">Manganese</keyword>
<keyword id="KW-0479">Metal-binding</keyword>
<keyword id="KW-0520">NAD</keyword>
<keyword id="KW-0560">Oxidoreductase</keyword>
<reference key="1">
    <citation type="submission" date="2005-03" db="EMBL/GenBank/DDBJ databases">
        <title>Comparison of the complete genome sequences of Rhodococcus erythropolis PR4 and Rhodococcus opacus B4.</title>
        <authorList>
            <person name="Takarada H."/>
            <person name="Sekine M."/>
            <person name="Hosoyama A."/>
            <person name="Yamada R."/>
            <person name="Fujisawa T."/>
            <person name="Omata S."/>
            <person name="Shimizu A."/>
            <person name="Tsukatani N."/>
            <person name="Tanikawa S."/>
            <person name="Fujita N."/>
            <person name="Harayama S."/>
        </authorList>
    </citation>
    <scope>NUCLEOTIDE SEQUENCE [LARGE SCALE GENOMIC DNA]</scope>
    <source>
        <strain>PR4 / NBRC 100887</strain>
    </source>
</reference>
<comment type="function">
    <text evidence="1">Catalyzes the oxidation of 3-carboxy-2-hydroxy-4-methylpentanoate (3-isopropylmalate) to 3-carboxy-4-methyl-2-oxopentanoate. The product decarboxylates to 4-methyl-2 oxopentanoate.</text>
</comment>
<comment type="catalytic activity">
    <reaction evidence="1">
        <text>(2R,3S)-3-isopropylmalate + NAD(+) = 4-methyl-2-oxopentanoate + CO2 + NADH</text>
        <dbReference type="Rhea" id="RHEA:32271"/>
        <dbReference type="ChEBI" id="CHEBI:16526"/>
        <dbReference type="ChEBI" id="CHEBI:17865"/>
        <dbReference type="ChEBI" id="CHEBI:35121"/>
        <dbReference type="ChEBI" id="CHEBI:57540"/>
        <dbReference type="ChEBI" id="CHEBI:57945"/>
        <dbReference type="EC" id="1.1.1.85"/>
    </reaction>
</comment>
<comment type="cofactor">
    <cofactor evidence="1">
        <name>Mg(2+)</name>
        <dbReference type="ChEBI" id="CHEBI:18420"/>
    </cofactor>
    <cofactor evidence="1">
        <name>Mn(2+)</name>
        <dbReference type="ChEBI" id="CHEBI:29035"/>
    </cofactor>
    <text evidence="1">Binds 1 Mg(2+) or Mn(2+) ion per subunit.</text>
</comment>
<comment type="pathway">
    <text evidence="1">Amino-acid biosynthesis; L-leucine biosynthesis; L-leucine from 3-methyl-2-oxobutanoate: step 3/4.</text>
</comment>
<comment type="subunit">
    <text evidence="1">Homodimer.</text>
</comment>
<comment type="subcellular location">
    <subcellularLocation>
        <location evidence="1">Cytoplasm</location>
    </subcellularLocation>
</comment>
<comment type="similarity">
    <text evidence="1">Belongs to the isocitrate and isopropylmalate dehydrogenases family. LeuB type 2 subfamily.</text>
</comment>
<protein>
    <recommendedName>
        <fullName evidence="1">3-isopropylmalate dehydrogenase</fullName>
        <ecNumber evidence="1">1.1.1.85</ecNumber>
    </recommendedName>
    <alternativeName>
        <fullName evidence="1">3-IPM-DH</fullName>
    </alternativeName>
    <alternativeName>
        <fullName evidence="1">Beta-IPM dehydrogenase</fullName>
        <shortName evidence="1">IMDH</shortName>
    </alternativeName>
</protein>
<organism>
    <name type="scientific">Rhodococcus erythropolis (strain PR4 / NBRC 100887)</name>
    <dbReference type="NCBI Taxonomy" id="234621"/>
    <lineage>
        <taxon>Bacteria</taxon>
        <taxon>Bacillati</taxon>
        <taxon>Actinomycetota</taxon>
        <taxon>Actinomycetes</taxon>
        <taxon>Mycobacteriales</taxon>
        <taxon>Nocardiaceae</taxon>
        <taxon>Rhodococcus</taxon>
        <taxon>Rhodococcus erythropolis group</taxon>
    </lineage>
</organism>
<proteinExistence type="inferred from homology"/>
<dbReference type="EC" id="1.1.1.85" evidence="1"/>
<dbReference type="EMBL" id="AP008957">
    <property type="protein sequence ID" value="BAH33109.1"/>
    <property type="molecule type" value="Genomic_DNA"/>
</dbReference>
<dbReference type="RefSeq" id="WP_020907259.1">
    <property type="nucleotide sequence ID" value="NC_012490.1"/>
</dbReference>
<dbReference type="SMR" id="C0ZXM4"/>
<dbReference type="KEGG" id="rer:RER_24010"/>
<dbReference type="eggNOG" id="COG0473">
    <property type="taxonomic scope" value="Bacteria"/>
</dbReference>
<dbReference type="HOGENOM" id="CLU_031953_0_1_11"/>
<dbReference type="UniPathway" id="UPA00048">
    <property type="reaction ID" value="UER00072"/>
</dbReference>
<dbReference type="Proteomes" id="UP000002204">
    <property type="component" value="Chromosome"/>
</dbReference>
<dbReference type="GO" id="GO:0005737">
    <property type="term" value="C:cytoplasm"/>
    <property type="evidence" value="ECO:0007669"/>
    <property type="project" value="UniProtKB-SubCell"/>
</dbReference>
<dbReference type="GO" id="GO:0003862">
    <property type="term" value="F:3-isopropylmalate dehydrogenase activity"/>
    <property type="evidence" value="ECO:0007669"/>
    <property type="project" value="UniProtKB-UniRule"/>
</dbReference>
<dbReference type="GO" id="GO:0000287">
    <property type="term" value="F:magnesium ion binding"/>
    <property type="evidence" value="ECO:0007669"/>
    <property type="project" value="InterPro"/>
</dbReference>
<dbReference type="GO" id="GO:0051287">
    <property type="term" value="F:NAD binding"/>
    <property type="evidence" value="ECO:0007669"/>
    <property type="project" value="InterPro"/>
</dbReference>
<dbReference type="GO" id="GO:0009098">
    <property type="term" value="P:L-leucine biosynthetic process"/>
    <property type="evidence" value="ECO:0007669"/>
    <property type="project" value="UniProtKB-UniRule"/>
</dbReference>
<dbReference type="Gene3D" id="3.40.718.10">
    <property type="entry name" value="Isopropylmalate Dehydrogenase"/>
    <property type="match status" value="1"/>
</dbReference>
<dbReference type="HAMAP" id="MF_01035">
    <property type="entry name" value="LeuB_type2"/>
    <property type="match status" value="1"/>
</dbReference>
<dbReference type="InterPro" id="IPR050501">
    <property type="entry name" value="ICDH/IPMDH"/>
</dbReference>
<dbReference type="InterPro" id="IPR019818">
    <property type="entry name" value="IsoCit/isopropylmalate_DH_CS"/>
</dbReference>
<dbReference type="InterPro" id="IPR024084">
    <property type="entry name" value="IsoPropMal-DH-like_dom"/>
</dbReference>
<dbReference type="InterPro" id="IPR023698">
    <property type="entry name" value="LeuB_actb"/>
</dbReference>
<dbReference type="NCBIfam" id="NF002898">
    <property type="entry name" value="PRK03437.1"/>
    <property type="match status" value="1"/>
</dbReference>
<dbReference type="PANTHER" id="PTHR43275">
    <property type="entry name" value="D-MALATE DEHYDROGENASE [DECARBOXYLATING]"/>
    <property type="match status" value="1"/>
</dbReference>
<dbReference type="PANTHER" id="PTHR43275:SF1">
    <property type="entry name" value="D-MALATE DEHYDROGENASE [DECARBOXYLATING]"/>
    <property type="match status" value="1"/>
</dbReference>
<dbReference type="Pfam" id="PF00180">
    <property type="entry name" value="Iso_dh"/>
    <property type="match status" value="1"/>
</dbReference>
<dbReference type="SMART" id="SM01329">
    <property type="entry name" value="Iso_dh"/>
    <property type="match status" value="1"/>
</dbReference>
<dbReference type="SUPFAM" id="SSF53659">
    <property type="entry name" value="Isocitrate/Isopropylmalate dehydrogenase-like"/>
    <property type="match status" value="1"/>
</dbReference>
<dbReference type="PROSITE" id="PS00470">
    <property type="entry name" value="IDH_IMDH"/>
    <property type="match status" value="1"/>
</dbReference>
<sequence length="337" mass="35536">MKLAVIPGDGIGVEVTAEALKVLGKLVPDLETTEYDLGARRYNATGELLPADELDQIRQHDAILLGAIGDPRIVAPGILERGLLLNMRFQLDHHVNLRPAQLYPGALSPLAAQPEIDFVVVREGTEGPYTGNGGAIRVGTDHEIATEVSINTWFGAERVVRYAFALAQTRSKHLTLIHKTNVLSNAGAIWTRAIETVGAEYPDVETAYCHIDAATIYMVTDPSRFDVIVTDNLFGDIITDLAGAVTGGIGLAASGNIDASGTNPSMFEPVHGSAPDIAGKGIADPTAAILSAALLLRHLGREDDAARVEAVVAADLATRGEGPISTTEIGDRITAAL</sequence>
<gene>
    <name evidence="1" type="primary">leuB</name>
    <name type="ordered locus">RER_24010</name>
</gene>
<name>LEU3_RHOE4</name>
<accession>C0ZXM4</accession>